<sequence length="85" mass="9391">MPKLEMMLLVLLILPLCYIDAVGPPPPWNMEDEIIEHWQKLHCHEISDLTPWILCSPEPLCGGKGCCAQEVCDCSGPACTCPPCL</sequence>
<name>CDS1_CONLT</name>
<organism>
    <name type="scientific">Conus litteratus</name>
    <name type="common">Lettered cone</name>
    <dbReference type="NCBI Taxonomy" id="89445"/>
    <lineage>
        <taxon>Eukaryota</taxon>
        <taxon>Metazoa</taxon>
        <taxon>Spiralia</taxon>
        <taxon>Lophotrochozoa</taxon>
        <taxon>Mollusca</taxon>
        <taxon>Gastropoda</taxon>
        <taxon>Caenogastropoda</taxon>
        <taxon>Neogastropoda</taxon>
        <taxon>Conoidea</taxon>
        <taxon>Conidae</taxon>
        <taxon>Conus</taxon>
        <taxon>Elisaconus</taxon>
    </lineage>
</organism>
<accession>F6JWU7</accession>
<comment type="function">
    <text evidence="3">Alpha-conotoxins act on postsynaptic membranes, they bind to the nicotinic acetylcholine receptors (nAChR) and thus inhibit them. This toxin weakly inhibits alpha-9-alpha-10/CHRNA9-CHRNA10 nAChRs (IC(50)=3 uM).</text>
</comment>
<comment type="subcellular location">
    <subcellularLocation>
        <location evidence="6">Secreted</location>
    </subcellularLocation>
</comment>
<comment type="tissue specificity">
    <text evidence="6">Expressed by the venom duct.</text>
</comment>
<comment type="domain">
    <text evidence="5">The cysteine framework is XXVIII (C-C-C-CC-C-C-C-C-C).</text>
</comment>
<comment type="miscellaneous">
    <text evidence="3">Negative results: Very weakly inhibits alpha-3-beta-2/CHRNA3-CHRNB2 (19.4% when 10 uM of toxin is tested) and alpha-4-beta-2/CHRNA4-CHRNB2 (18% at 10 uM) nAChRs subtypes. Has no effect on alpha-3-beta-4/CHRNA3-CHRNB4, alpha-4-beta-4/CHRNA4-CHRNB4, alpha-2-beta-2/CHRNA2-CHRNB2, alpha-2-beta-4/CHRNA2-CHRNB4, alpha-7/CHRNA7 and alpha-6/alpha-3-beta-2-beta-3 (CHRNA6/CHRNA3-CHRNB2-CHRNB3) nAChRs subtypes.</text>
</comment>
<comment type="similarity">
    <text evidence="5">Belongs to the conotoxin D superfamily.</text>
</comment>
<dbReference type="EMBL" id="HM003926">
    <property type="protein sequence ID" value="ADZ76484.1"/>
    <property type="molecule type" value="mRNA"/>
</dbReference>
<dbReference type="GO" id="GO:0005576">
    <property type="term" value="C:extracellular region"/>
    <property type="evidence" value="ECO:0007669"/>
    <property type="project" value="UniProtKB-SubCell"/>
</dbReference>
<dbReference type="GO" id="GO:0035792">
    <property type="term" value="C:host cell postsynaptic membrane"/>
    <property type="evidence" value="ECO:0007669"/>
    <property type="project" value="UniProtKB-KW"/>
</dbReference>
<dbReference type="GO" id="GO:0030550">
    <property type="term" value="F:acetylcholine receptor inhibitor activity"/>
    <property type="evidence" value="ECO:0007669"/>
    <property type="project" value="UniProtKB-KW"/>
</dbReference>
<dbReference type="GO" id="GO:0090729">
    <property type="term" value="F:toxin activity"/>
    <property type="evidence" value="ECO:0007669"/>
    <property type="project" value="UniProtKB-KW"/>
</dbReference>
<feature type="signal peptide" evidence="2">
    <location>
        <begin position="1"/>
        <end position="21"/>
    </location>
</feature>
<feature type="propeptide" id="PRO_0000451012" evidence="6">
    <location>
        <begin position="22"/>
        <end position="40"/>
    </location>
</feature>
<feature type="chain" id="PRO_5003337452" description="Alpha-conotoxin Lt28.1" evidence="6">
    <location>
        <begin position="41"/>
        <end position="85"/>
    </location>
</feature>
<feature type="disulfide bond" description="Interchain (with C-63)" evidence="1">
    <location>
        <position position="43"/>
    </location>
</feature>
<feature type="disulfide bond" description="Interchain (with C-51)" evidence="1">
    <location>
        <position position="55"/>
    </location>
</feature>
<feature type="disulfide bond" evidence="1">
    <location>
        <begin position="61"/>
        <end position="74"/>
    </location>
</feature>
<feature type="disulfide bond" evidence="5">
    <location>
        <begin position="66"/>
        <end position="84"/>
    </location>
</feature>
<feature type="disulfide bond" evidence="1">
    <location>
        <begin position="67"/>
        <end position="79"/>
    </location>
</feature>
<feature type="disulfide bond" evidence="1">
    <location>
        <begin position="72"/>
        <end position="81"/>
    </location>
</feature>
<reference key="1">
    <citation type="journal article" date="2017" name="Peptides">
        <title>Cloning, expression and functional characterization of a D-superfamily conotoxin Lt28.1 with previously undescribed cysteine pattern.</title>
        <authorList>
            <person name="Lu J."/>
            <person name="Zhang K."/>
            <person name="Wang S."/>
            <person name="Sun T."/>
            <person name="Yu S."/>
            <person name="Dai Q."/>
            <person name="Liu Z."/>
        </authorList>
    </citation>
    <scope>NUCLEOTIDE SEQUENCE [MRNA]</scope>
    <scope>FUNCTION</scope>
    <scope>RECOMBINANT EXPRESSION</scope>
    <source>
        <tissue>Venom duct</tissue>
    </source>
</reference>
<proteinExistence type="inferred from homology"/>
<protein>
    <recommendedName>
        <fullName evidence="6">Alpha-conotoxin Lt28.1</fullName>
    </recommendedName>
    <alternativeName>
        <fullName evidence="7">Conotoxin Lt15.2</fullName>
    </alternativeName>
    <alternativeName>
        <fullName evidence="4">Conotoxin Lt28.1</fullName>
    </alternativeName>
</protein>
<evidence type="ECO:0000250" key="1">
    <source>
        <dbReference type="UniProtKB" id="A0A0A0VBX4"/>
    </source>
</evidence>
<evidence type="ECO:0000255" key="2"/>
<evidence type="ECO:0000269" key="3">
    <source>
    </source>
</evidence>
<evidence type="ECO:0000303" key="4">
    <source>
    </source>
</evidence>
<evidence type="ECO:0000305" key="5"/>
<evidence type="ECO:0000305" key="6">
    <source>
    </source>
</evidence>
<evidence type="ECO:0000312" key="7">
    <source>
        <dbReference type="EMBL" id="ADZ76484.1"/>
    </source>
</evidence>
<keyword id="KW-0008">Acetylcholine receptor inhibiting toxin</keyword>
<keyword id="KW-1015">Disulfide bond</keyword>
<keyword id="KW-0528">Neurotoxin</keyword>
<keyword id="KW-0629">Postsynaptic neurotoxin</keyword>
<keyword id="KW-0964">Secreted</keyword>
<keyword id="KW-0732">Signal</keyword>
<keyword id="KW-0800">Toxin</keyword>